<organism>
    <name type="scientific">Bacillus cereus (strain 03BB102)</name>
    <dbReference type="NCBI Taxonomy" id="572264"/>
    <lineage>
        <taxon>Bacteria</taxon>
        <taxon>Bacillati</taxon>
        <taxon>Bacillota</taxon>
        <taxon>Bacilli</taxon>
        <taxon>Bacillales</taxon>
        <taxon>Bacillaceae</taxon>
        <taxon>Bacillus</taxon>
        <taxon>Bacillus cereus group</taxon>
    </lineage>
</organism>
<feature type="chain" id="PRO_1000165107" description="Putative metal-dependent hydrolase BCA_2790">
    <location>
        <begin position="1"/>
        <end position="173"/>
    </location>
</feature>
<feature type="binding site" evidence="1">
    <location>
        <position position="65"/>
    </location>
    <ligand>
        <name>Zn(2+)</name>
        <dbReference type="ChEBI" id="CHEBI:29105"/>
    </ligand>
</feature>
<feature type="binding site" evidence="1">
    <location>
        <position position="156"/>
    </location>
    <ligand>
        <name>Zn(2+)</name>
        <dbReference type="ChEBI" id="CHEBI:29105"/>
    </ligand>
</feature>
<feature type="binding site" evidence="1">
    <location>
        <position position="160"/>
    </location>
    <ligand>
        <name>Zn(2+)</name>
        <dbReference type="ChEBI" id="CHEBI:29105"/>
    </ligand>
</feature>
<protein>
    <recommendedName>
        <fullName evidence="1">Putative metal-dependent hydrolase BCA_2790</fullName>
        <ecNumber evidence="1">3.-.-.-</ecNumber>
    </recommendedName>
</protein>
<sequence length="173" mass="20413">MNDLRYPIGQFTYKRPITEEMIDTWIQEIEDLPNELTKAIKDLDQKQLDTPYRVGGWTVRQVVHHVVDSHMNSYIRFKLALTEKNPTIKPYKEEKWAELPDSKLPVDVSLVMLESLHKRWVNLLYSLELEDLEKTFNHPETGETKLAAAIGLYAWHGRHHTAHITSLRKRLNW</sequence>
<proteinExistence type="inferred from homology"/>
<accession>C1EWU0</accession>
<gene>
    <name type="ordered locus">BCA_2790</name>
</gene>
<name>Y2790_BACC3</name>
<keyword id="KW-0963">Cytoplasm</keyword>
<keyword id="KW-0378">Hydrolase</keyword>
<keyword id="KW-0479">Metal-binding</keyword>
<keyword id="KW-0862">Zinc</keyword>
<evidence type="ECO:0000255" key="1">
    <source>
        <dbReference type="HAMAP-Rule" id="MF_01256"/>
    </source>
</evidence>
<comment type="function">
    <text evidence="1">Possible metal-dependent hydrolase.</text>
</comment>
<comment type="cofactor">
    <cofactor evidence="1">
        <name>Zn(2+)</name>
        <dbReference type="ChEBI" id="CHEBI:29105"/>
    </cofactor>
    <text evidence="1">Binds 1 zinc ion per subunit.</text>
</comment>
<comment type="subunit">
    <text evidence="1">Homodimer.</text>
</comment>
<comment type="subcellular location">
    <subcellularLocation>
        <location evidence="1">Cytoplasm</location>
    </subcellularLocation>
</comment>
<comment type="similarity">
    <text evidence="1">Belongs to the metal hydrolase YfiT family.</text>
</comment>
<reference key="1">
    <citation type="submission" date="2009-02" db="EMBL/GenBank/DDBJ databases">
        <title>Genome sequence of Bacillus cereus 03BB102.</title>
        <authorList>
            <person name="Dodson R.J."/>
            <person name="Jackson P."/>
            <person name="Munk A.C."/>
            <person name="Brettin T."/>
            <person name="Bruce D."/>
            <person name="Detter C."/>
            <person name="Tapia R."/>
            <person name="Han C."/>
            <person name="Sutton G."/>
            <person name="Sims D."/>
        </authorList>
    </citation>
    <scope>NUCLEOTIDE SEQUENCE [LARGE SCALE GENOMIC DNA]</scope>
    <source>
        <strain>03BB102</strain>
    </source>
</reference>
<dbReference type="EC" id="3.-.-.-" evidence="1"/>
<dbReference type="EMBL" id="CP001407">
    <property type="protein sequence ID" value="ACO27322.1"/>
    <property type="molecule type" value="Genomic_DNA"/>
</dbReference>
<dbReference type="RefSeq" id="WP_000999077.1">
    <property type="nucleotide sequence ID" value="NZ_CP009318.1"/>
</dbReference>
<dbReference type="SMR" id="C1EWU0"/>
<dbReference type="KEGG" id="bcx:BCA_2790"/>
<dbReference type="PATRIC" id="fig|572264.18.peg.2738"/>
<dbReference type="Proteomes" id="UP000002210">
    <property type="component" value="Chromosome"/>
</dbReference>
<dbReference type="GO" id="GO:0005737">
    <property type="term" value="C:cytoplasm"/>
    <property type="evidence" value="ECO:0007669"/>
    <property type="project" value="UniProtKB-SubCell"/>
</dbReference>
<dbReference type="GO" id="GO:0016787">
    <property type="term" value="F:hydrolase activity"/>
    <property type="evidence" value="ECO:0007669"/>
    <property type="project" value="UniProtKB-UniRule"/>
</dbReference>
<dbReference type="GO" id="GO:0008270">
    <property type="term" value="F:zinc ion binding"/>
    <property type="evidence" value="ECO:0007669"/>
    <property type="project" value="UniProtKB-UniRule"/>
</dbReference>
<dbReference type="Gene3D" id="1.20.120.450">
    <property type="entry name" value="dinb family like domain"/>
    <property type="match status" value="1"/>
</dbReference>
<dbReference type="HAMAP" id="MF_01256">
    <property type="entry name" value="YfiT_hydrol"/>
    <property type="match status" value="1"/>
</dbReference>
<dbReference type="InterPro" id="IPR024775">
    <property type="entry name" value="DinB-like"/>
</dbReference>
<dbReference type="InterPro" id="IPR034660">
    <property type="entry name" value="DinB/YfiT-like"/>
</dbReference>
<dbReference type="InterPro" id="IPR023774">
    <property type="entry name" value="Put_metal_dep_hydrolase_YfiT"/>
</dbReference>
<dbReference type="NCBIfam" id="NF009807">
    <property type="entry name" value="PRK13291.1"/>
    <property type="match status" value="1"/>
</dbReference>
<dbReference type="Pfam" id="PF12867">
    <property type="entry name" value="DinB_2"/>
    <property type="match status" value="1"/>
</dbReference>
<dbReference type="SUPFAM" id="SSF109854">
    <property type="entry name" value="DinB/YfiT-like putative metalloenzymes"/>
    <property type="match status" value="1"/>
</dbReference>